<organism>
    <name type="scientific">Homo sapiens</name>
    <name type="common">Human</name>
    <dbReference type="NCBI Taxonomy" id="9606"/>
    <lineage>
        <taxon>Eukaryota</taxon>
        <taxon>Metazoa</taxon>
        <taxon>Chordata</taxon>
        <taxon>Craniata</taxon>
        <taxon>Vertebrata</taxon>
        <taxon>Euteleostomi</taxon>
        <taxon>Mammalia</taxon>
        <taxon>Eutheria</taxon>
        <taxon>Euarchontoglires</taxon>
        <taxon>Primates</taxon>
        <taxon>Haplorrhini</taxon>
        <taxon>Catarrhini</taxon>
        <taxon>Hominidae</taxon>
        <taxon>Homo</taxon>
    </lineage>
</organism>
<reference key="1">
    <citation type="journal article" date="2006" name="Nature">
        <title>The DNA sequence and biological annotation of human chromosome 1.</title>
        <authorList>
            <person name="Gregory S.G."/>
            <person name="Barlow K.F."/>
            <person name="McLay K.E."/>
            <person name="Kaul R."/>
            <person name="Swarbreck D."/>
            <person name="Dunham A."/>
            <person name="Scott C.E."/>
            <person name="Howe K.L."/>
            <person name="Woodfine K."/>
            <person name="Spencer C.C.A."/>
            <person name="Jones M.C."/>
            <person name="Gillson C."/>
            <person name="Searle S."/>
            <person name="Zhou Y."/>
            <person name="Kokocinski F."/>
            <person name="McDonald L."/>
            <person name="Evans R."/>
            <person name="Phillips K."/>
            <person name="Atkinson A."/>
            <person name="Cooper R."/>
            <person name="Jones C."/>
            <person name="Hall R.E."/>
            <person name="Andrews T.D."/>
            <person name="Lloyd C."/>
            <person name="Ainscough R."/>
            <person name="Almeida J.P."/>
            <person name="Ambrose K.D."/>
            <person name="Anderson F."/>
            <person name="Andrew R.W."/>
            <person name="Ashwell R.I.S."/>
            <person name="Aubin K."/>
            <person name="Babbage A.K."/>
            <person name="Bagguley C.L."/>
            <person name="Bailey J."/>
            <person name="Beasley H."/>
            <person name="Bethel G."/>
            <person name="Bird C.P."/>
            <person name="Bray-Allen S."/>
            <person name="Brown J.Y."/>
            <person name="Brown A.J."/>
            <person name="Buckley D."/>
            <person name="Burton J."/>
            <person name="Bye J."/>
            <person name="Carder C."/>
            <person name="Chapman J.C."/>
            <person name="Clark S.Y."/>
            <person name="Clarke G."/>
            <person name="Clee C."/>
            <person name="Cobley V."/>
            <person name="Collier R.E."/>
            <person name="Corby N."/>
            <person name="Coville G.J."/>
            <person name="Davies J."/>
            <person name="Deadman R."/>
            <person name="Dunn M."/>
            <person name="Earthrowl M."/>
            <person name="Ellington A.G."/>
            <person name="Errington H."/>
            <person name="Frankish A."/>
            <person name="Frankland J."/>
            <person name="French L."/>
            <person name="Garner P."/>
            <person name="Garnett J."/>
            <person name="Gay L."/>
            <person name="Ghori M.R.J."/>
            <person name="Gibson R."/>
            <person name="Gilby L.M."/>
            <person name="Gillett W."/>
            <person name="Glithero R.J."/>
            <person name="Grafham D.V."/>
            <person name="Griffiths C."/>
            <person name="Griffiths-Jones S."/>
            <person name="Grocock R."/>
            <person name="Hammond S."/>
            <person name="Harrison E.S.I."/>
            <person name="Hart E."/>
            <person name="Haugen E."/>
            <person name="Heath P.D."/>
            <person name="Holmes S."/>
            <person name="Holt K."/>
            <person name="Howden P.J."/>
            <person name="Hunt A.R."/>
            <person name="Hunt S.E."/>
            <person name="Hunter G."/>
            <person name="Isherwood J."/>
            <person name="James R."/>
            <person name="Johnson C."/>
            <person name="Johnson D."/>
            <person name="Joy A."/>
            <person name="Kay M."/>
            <person name="Kershaw J.K."/>
            <person name="Kibukawa M."/>
            <person name="Kimberley A.M."/>
            <person name="King A."/>
            <person name="Knights A.J."/>
            <person name="Lad H."/>
            <person name="Laird G."/>
            <person name="Lawlor S."/>
            <person name="Leongamornlert D.A."/>
            <person name="Lloyd D.M."/>
            <person name="Loveland J."/>
            <person name="Lovell J."/>
            <person name="Lush M.J."/>
            <person name="Lyne R."/>
            <person name="Martin S."/>
            <person name="Mashreghi-Mohammadi M."/>
            <person name="Matthews L."/>
            <person name="Matthews N.S.W."/>
            <person name="McLaren S."/>
            <person name="Milne S."/>
            <person name="Mistry S."/>
            <person name="Moore M.J.F."/>
            <person name="Nickerson T."/>
            <person name="O'Dell C.N."/>
            <person name="Oliver K."/>
            <person name="Palmeiri A."/>
            <person name="Palmer S.A."/>
            <person name="Parker A."/>
            <person name="Patel D."/>
            <person name="Pearce A.V."/>
            <person name="Peck A.I."/>
            <person name="Pelan S."/>
            <person name="Phelps K."/>
            <person name="Phillimore B.J."/>
            <person name="Plumb R."/>
            <person name="Rajan J."/>
            <person name="Raymond C."/>
            <person name="Rouse G."/>
            <person name="Saenphimmachak C."/>
            <person name="Sehra H.K."/>
            <person name="Sheridan E."/>
            <person name="Shownkeen R."/>
            <person name="Sims S."/>
            <person name="Skuce C.D."/>
            <person name="Smith M."/>
            <person name="Steward C."/>
            <person name="Subramanian S."/>
            <person name="Sycamore N."/>
            <person name="Tracey A."/>
            <person name="Tromans A."/>
            <person name="Van Helmond Z."/>
            <person name="Wall M."/>
            <person name="Wallis J.M."/>
            <person name="White S."/>
            <person name="Whitehead S.L."/>
            <person name="Wilkinson J.E."/>
            <person name="Willey D.L."/>
            <person name="Williams H."/>
            <person name="Wilming L."/>
            <person name="Wray P.W."/>
            <person name="Wu Z."/>
            <person name="Coulson A."/>
            <person name="Vaudin M."/>
            <person name="Sulston J.E."/>
            <person name="Durbin R.M."/>
            <person name="Hubbard T."/>
            <person name="Wooster R."/>
            <person name="Dunham I."/>
            <person name="Carter N.P."/>
            <person name="McVean G."/>
            <person name="Ross M.T."/>
            <person name="Harrow J."/>
            <person name="Olson M.V."/>
            <person name="Beck S."/>
            <person name="Rogers J."/>
            <person name="Bentley D.R."/>
        </authorList>
    </citation>
    <scope>NUCLEOTIDE SEQUENCE [LARGE SCALE GENOMIC DNA]</scope>
</reference>
<reference key="2">
    <citation type="journal article" date="2004" name="Genome Res.">
        <title>The status, quality, and expansion of the NIH full-length cDNA project: the Mammalian Gene Collection (MGC).</title>
        <authorList>
            <consortium name="The MGC Project Team"/>
        </authorList>
    </citation>
    <scope>NUCLEOTIDE SEQUENCE [LARGE SCALE MRNA]</scope>
    <scope>VARIANTS VAL-69 AND HIS-217</scope>
    <source>
        <tissue>Testis</tissue>
    </source>
</reference>
<reference key="3">
    <citation type="submission" date="2003-03" db="EMBL/GenBank/DDBJ databases">
        <title>A new spermatogenesis-related gene.</title>
        <authorList>
            <person name="Yang C.B."/>
            <person name="Miao S.Y."/>
            <person name="Zhang X.D."/>
            <person name="Qiao Y."/>
            <person name="Liang G."/>
            <person name="Wang L.F."/>
        </authorList>
    </citation>
    <scope>NUCLEOTIDE SEQUENCE [LARGE SCALE MRNA] OF 1-253</scope>
    <scope>VARIANT VAL-69</scope>
    <source>
        <tissue>Testis</tissue>
    </source>
</reference>
<reference key="4">
    <citation type="journal article" date="2016" name="Biol. Reprod.">
        <title>Deficiency of SPATA46, a novel nuclear membrane protein, causes subfertility in male mice.</title>
        <authorList>
            <person name="Chen J."/>
            <person name="Gu Y."/>
            <person name="Zhang Z."/>
            <person name="Zheng W."/>
            <person name="Yang L."/>
            <person name="Huang W."/>
            <person name="Lin S."/>
            <person name="Li Y."/>
            <person name="Guo H."/>
            <person name="Luo M."/>
            <person name="Ma Q."/>
            <person name="Jiang Z."/>
            <person name="Tang A."/>
            <person name="Gui Y."/>
        </authorList>
    </citation>
    <scope>TISSUE SPECIFICITY</scope>
</reference>
<keyword id="KW-0221">Differentiation</keyword>
<keyword id="KW-0472">Membrane</keyword>
<keyword id="KW-0539">Nucleus</keyword>
<keyword id="KW-1267">Proteomics identification</keyword>
<keyword id="KW-1185">Reference proteome</keyword>
<keyword id="KW-0744">Spermatogenesis</keyword>
<comment type="function">
    <text evidence="1">Plays a role in spermiogenesis and fertilization.</text>
</comment>
<comment type="interaction">
    <interactant intactId="EBI-750105">
        <id>Q5T0L3</id>
    </interactant>
    <interactant intactId="EBI-11954292">
        <id>Q86V38</id>
        <label>ATN1</label>
    </interactant>
    <organismsDiffer>false</organismsDiffer>
    <experiments>3</experiments>
</comment>
<comment type="interaction">
    <interactant intactId="EBI-750105">
        <id>Q5T0L3</id>
    </interactant>
    <interactant intactId="EBI-6875961">
        <id>P02489</id>
        <label>CRYAA</label>
    </interactant>
    <organismsDiffer>false</organismsDiffer>
    <experiments>3</experiments>
</comment>
<comment type="interaction">
    <interactant intactId="EBI-750105">
        <id>Q5T0L3</id>
    </interactant>
    <interactant intactId="EBI-3867333">
        <id>A8MQ03</id>
        <label>CYSRT1</label>
    </interactant>
    <organismsDiffer>false</organismsDiffer>
    <experiments>3</experiments>
</comment>
<comment type="interaction">
    <interactant intactId="EBI-750105">
        <id>Q5T0L3</id>
    </interactant>
    <interactant intactId="EBI-356015">
        <id>Q14204</id>
        <label>DYNC1H1</label>
    </interactant>
    <organismsDiffer>false</organismsDiffer>
    <experiments>3</experiments>
</comment>
<comment type="interaction">
    <interactant intactId="EBI-750105">
        <id>Q5T0L3</id>
    </interactant>
    <interactant intactId="EBI-744099">
        <id>Q9H0I2</id>
        <label>ENKD1</label>
    </interactant>
    <organismsDiffer>false</organismsDiffer>
    <experiments>3</experiments>
</comment>
<comment type="interaction">
    <interactant intactId="EBI-750105">
        <id>Q5T0L3</id>
    </interactant>
    <interactant intactId="EBI-3915568">
        <id>P50747</id>
        <label>HLCS</label>
    </interactant>
    <organismsDiffer>false</organismsDiffer>
    <experiments>6</experiments>
</comment>
<comment type="interaction">
    <interactant intactId="EBI-750105">
        <id>Q5T0L3</id>
    </interactant>
    <interactant intactId="EBI-16399628">
        <id>P31942-2</id>
        <label>HNRNPH3</label>
    </interactant>
    <organismsDiffer>false</organismsDiffer>
    <experiments>3</experiments>
</comment>
<comment type="interaction">
    <interactant intactId="EBI-750105">
        <id>Q5T0L3</id>
    </interactant>
    <interactant intactId="EBI-2432309">
        <id>Q92876</id>
        <label>KLK6</label>
    </interactant>
    <organismsDiffer>false</organismsDiffer>
    <experiments>3</experiments>
</comment>
<comment type="interaction">
    <interactant intactId="EBI-750105">
        <id>Q5T0L3</id>
    </interactant>
    <interactant intactId="EBI-1047093">
        <id>O76011</id>
        <label>KRT34</label>
    </interactant>
    <organismsDiffer>false</organismsDiffer>
    <experiments>3</experiments>
</comment>
<comment type="interaction">
    <interactant intactId="EBI-750105">
        <id>Q5T0L3</id>
    </interactant>
    <interactant intactId="EBI-740322">
        <id>Q93062</id>
        <label>RBPMS</label>
    </interactant>
    <organismsDiffer>false</organismsDiffer>
    <experiments>3</experiments>
</comment>
<comment type="interaction">
    <interactant intactId="EBI-750105">
        <id>Q5T0L3</id>
    </interactant>
    <interactant intactId="EBI-3939165">
        <id>O43711</id>
        <label>TLX3</label>
    </interactant>
    <organismsDiffer>false</organismsDiffer>
    <experiments>3</experiments>
</comment>
<comment type="interaction">
    <interactant intactId="EBI-750105">
        <id>Q5T0L3</id>
    </interactant>
    <interactant intactId="EBI-359224">
        <id>Q13077</id>
        <label>TRAF1</label>
    </interactant>
    <organismsDiffer>false</organismsDiffer>
    <experiments>3</experiments>
</comment>
<comment type="subcellular location">
    <subcellularLocation>
        <location evidence="1">Nucleus membrane</location>
    </subcellularLocation>
    <text evidence="1">Located throughout the subacrosomal area.</text>
</comment>
<comment type="tissue specificity">
    <text evidence="4">Testis-specific (PubMed:27488028).</text>
</comment>
<comment type="sequence caution" evidence="7">
    <conflict type="frameshift">
        <sequence resource="EMBL-CDS" id="AAP20051"/>
    </conflict>
</comment>
<dbReference type="EMBL" id="AL512785">
    <property type="status" value="NOT_ANNOTATED_CDS"/>
    <property type="molecule type" value="Genomic_DNA"/>
</dbReference>
<dbReference type="EMBL" id="BC032957">
    <property type="protein sequence ID" value="AAH32957.1"/>
    <property type="molecule type" value="mRNA"/>
</dbReference>
<dbReference type="EMBL" id="AY248900">
    <property type="protein sequence ID" value="AAP20051.1"/>
    <property type="status" value="ALT_FRAME"/>
    <property type="molecule type" value="mRNA"/>
</dbReference>
<dbReference type="CCDS" id="CCDS1238.1"/>
<dbReference type="RefSeq" id="NP_872387.2">
    <property type="nucleotide sequence ID" value="NM_182581.4"/>
</dbReference>
<dbReference type="BioGRID" id="129933">
    <property type="interactions" value="35"/>
</dbReference>
<dbReference type="FunCoup" id="Q5T0L3">
    <property type="interactions" value="14"/>
</dbReference>
<dbReference type="IntAct" id="Q5T0L3">
    <property type="interactions" value="31"/>
</dbReference>
<dbReference type="STRING" id="9606.ENSP00000356912"/>
<dbReference type="iPTMnet" id="Q5T0L3"/>
<dbReference type="PhosphoSitePlus" id="Q5T0L3"/>
<dbReference type="BioMuta" id="SPATA46"/>
<dbReference type="DMDM" id="317373467"/>
<dbReference type="PaxDb" id="9606-ENSP00000356912"/>
<dbReference type="PeptideAtlas" id="Q5T0L3"/>
<dbReference type="ProteomicsDB" id="64178"/>
<dbReference type="Antibodypedia" id="34319">
    <property type="antibodies" value="166 antibodies from 16 providers"/>
</dbReference>
<dbReference type="DNASU" id="284680"/>
<dbReference type="Ensembl" id="ENST00000367935.10">
    <property type="protein sequence ID" value="ENSP00000356912.4"/>
    <property type="gene ID" value="ENSG00000171722.13"/>
</dbReference>
<dbReference type="GeneID" id="284680"/>
<dbReference type="KEGG" id="hsa:284680"/>
<dbReference type="MANE-Select" id="ENST00000367935.10">
    <property type="protein sequence ID" value="ENSP00000356912.4"/>
    <property type="RefSeq nucleotide sequence ID" value="NM_182581.4"/>
    <property type="RefSeq protein sequence ID" value="NP_872387.2"/>
</dbReference>
<dbReference type="UCSC" id="uc001gbx.3">
    <property type="organism name" value="human"/>
</dbReference>
<dbReference type="AGR" id="HGNC:27648"/>
<dbReference type="CTD" id="284680"/>
<dbReference type="GeneCards" id="SPATA46"/>
<dbReference type="HGNC" id="HGNC:27648">
    <property type="gene designation" value="SPATA46"/>
</dbReference>
<dbReference type="HPA" id="ENSG00000171722">
    <property type="expression patterns" value="Tissue enriched (testis)"/>
</dbReference>
<dbReference type="MIM" id="617257">
    <property type="type" value="gene"/>
</dbReference>
<dbReference type="neXtProt" id="NX_Q5T0L3"/>
<dbReference type="OpenTargets" id="ENSG00000171722"/>
<dbReference type="PharmGKB" id="PA142672495"/>
<dbReference type="VEuPathDB" id="HostDB:ENSG00000171722"/>
<dbReference type="eggNOG" id="ENOG502S3KA">
    <property type="taxonomic scope" value="Eukaryota"/>
</dbReference>
<dbReference type="GeneTree" id="ENSGT00390000007598"/>
<dbReference type="HOGENOM" id="CLU_073753_0_0_1"/>
<dbReference type="InParanoid" id="Q5T0L3"/>
<dbReference type="OMA" id="QYQSITV"/>
<dbReference type="OrthoDB" id="8898641at2759"/>
<dbReference type="PAN-GO" id="Q5T0L3">
    <property type="GO annotations" value="2 GO annotations based on evolutionary models"/>
</dbReference>
<dbReference type="PhylomeDB" id="Q5T0L3"/>
<dbReference type="TreeFam" id="TF337124"/>
<dbReference type="PathwayCommons" id="Q5T0L3"/>
<dbReference type="SignaLink" id="Q5T0L3"/>
<dbReference type="BioGRID-ORCS" id="284680">
    <property type="hits" value="10 hits in 1131 CRISPR screens"/>
</dbReference>
<dbReference type="GenomeRNAi" id="284680"/>
<dbReference type="Pharos" id="Q5T0L3">
    <property type="development level" value="Tdark"/>
</dbReference>
<dbReference type="PRO" id="PR:Q5T0L3"/>
<dbReference type="Proteomes" id="UP000005640">
    <property type="component" value="Chromosome 1"/>
</dbReference>
<dbReference type="RNAct" id="Q5T0L3">
    <property type="molecule type" value="protein"/>
</dbReference>
<dbReference type="Bgee" id="ENSG00000171722">
    <property type="expression patterns" value="Expressed in left testis and 106 other cell types or tissues"/>
</dbReference>
<dbReference type="ExpressionAtlas" id="Q5T0L3">
    <property type="expression patterns" value="baseline and differential"/>
</dbReference>
<dbReference type="GO" id="GO:0031965">
    <property type="term" value="C:nuclear membrane"/>
    <property type="evidence" value="ECO:0000250"/>
    <property type="project" value="UniProtKB"/>
</dbReference>
<dbReference type="GO" id="GO:0030154">
    <property type="term" value="P:cell differentiation"/>
    <property type="evidence" value="ECO:0007669"/>
    <property type="project" value="UniProtKB-KW"/>
</dbReference>
<dbReference type="GO" id="GO:0009566">
    <property type="term" value="P:fertilization"/>
    <property type="evidence" value="ECO:0000318"/>
    <property type="project" value="GO_Central"/>
</dbReference>
<dbReference type="GO" id="GO:0007342">
    <property type="term" value="P:fusion of sperm to egg plasma membrane involved in single fertilization"/>
    <property type="evidence" value="ECO:0000250"/>
    <property type="project" value="UniProtKB"/>
</dbReference>
<dbReference type="GO" id="GO:0007283">
    <property type="term" value="P:spermatogenesis"/>
    <property type="evidence" value="ECO:0000250"/>
    <property type="project" value="UniProtKB"/>
</dbReference>
<dbReference type="InterPro" id="IPR040879">
    <property type="entry name" value="Spt46-like"/>
</dbReference>
<dbReference type="PANTHER" id="PTHR33517">
    <property type="entry name" value="PROTEIN FAM170B-RELATED"/>
    <property type="match status" value="1"/>
</dbReference>
<dbReference type="PANTHER" id="PTHR33517:SF4">
    <property type="entry name" value="SPERMATOGENESIS-ASSOCIATED PROTEIN 46"/>
    <property type="match status" value="1"/>
</dbReference>
<dbReference type="Pfam" id="PF17734">
    <property type="entry name" value="Spt46"/>
    <property type="match status" value="1"/>
</dbReference>
<feature type="chain" id="PRO_0000279458" description="Spermatogenesis-associated protein 46">
    <location>
        <begin position="1"/>
        <end position="261"/>
    </location>
</feature>
<feature type="region of interest" description="Disordered" evidence="2">
    <location>
        <begin position="140"/>
        <end position="159"/>
    </location>
</feature>
<feature type="sequence variant" id="VAR_030904" description="In dbSNP:rs164181." evidence="3 5">
    <original>A</original>
    <variation>V</variation>
    <location>
        <position position="69"/>
    </location>
</feature>
<feature type="sequence variant" id="VAR_030905" description="In dbSNP:rs17853130." evidence="3">
    <original>R</original>
    <variation>H</variation>
    <location>
        <position position="217"/>
    </location>
</feature>
<evidence type="ECO:0000250" key="1">
    <source>
        <dbReference type="UniProtKB" id="Q4FZF2"/>
    </source>
</evidence>
<evidence type="ECO:0000256" key="2">
    <source>
        <dbReference type="SAM" id="MobiDB-lite"/>
    </source>
</evidence>
<evidence type="ECO:0000269" key="3">
    <source>
    </source>
</evidence>
<evidence type="ECO:0000269" key="4">
    <source>
    </source>
</evidence>
<evidence type="ECO:0000269" key="5">
    <source ref="3"/>
</evidence>
<evidence type="ECO:0000303" key="6">
    <source>
    </source>
</evidence>
<evidence type="ECO:0000305" key="7"/>
<evidence type="ECO:0000312" key="8">
    <source>
        <dbReference type="HGNC" id="HGNC:27648"/>
    </source>
</evidence>
<proteinExistence type="evidence at protein level"/>
<protein>
    <recommendedName>
        <fullName evidence="6">Spermatogenesis-associated protein 46</fullName>
    </recommendedName>
</protein>
<accession>Q5T0L3</accession>
<accession>Q6X961</accession>
<accession>Q8NEC3</accession>
<name>SPT46_HUMAN</name>
<sequence length="261" mass="29150">MENFSLLSISGPPISSSALSAFPDIMFSRATSLPDIAKTAVPTEASSPAQALPPQYQSIIVRQGIQNTALSPDCSLGDTQHGEKLRRNCTIYRPWFSPYSYFVCADKESQLEAYDFPEVQQDEGKWDNCLSEDMAENICSSSSSPENTCPREATKKSRHGLDSITSQDILMASRWHPAQQNGYKCVACCRMYPTLDFLKSHIKRGFREGFSCKVYYRKLKALWSKEQKARLGDRLSSGSCQAFNSPAEHLRQIGGEAYLCL</sequence>
<gene>
    <name evidence="8" type="primary">SPATA46</name>
    <name type="synonym">C1orf111</name>
    <name type="ORF">HSD20</name>
</gene>